<accession>O18753</accession>
<proteinExistence type="inferred from homology"/>
<name>BDNF_HELMA</name>
<organism>
    <name type="scientific">Helarctos malayanus</name>
    <name type="common">Malayan sun bear</name>
    <name type="synonym">Ursus malayanus</name>
    <dbReference type="NCBI Taxonomy" id="9634"/>
    <lineage>
        <taxon>Eukaryota</taxon>
        <taxon>Metazoa</taxon>
        <taxon>Chordata</taxon>
        <taxon>Craniata</taxon>
        <taxon>Vertebrata</taxon>
        <taxon>Euteleostomi</taxon>
        <taxon>Mammalia</taxon>
        <taxon>Eutheria</taxon>
        <taxon>Laurasiatheria</taxon>
        <taxon>Carnivora</taxon>
        <taxon>Caniformia</taxon>
        <taxon>Ursidae</taxon>
        <taxon>Helarctos</taxon>
    </lineage>
</organism>
<comment type="function">
    <text evidence="1 2">Important signaling molecule that activates signaling cascades downstream of NTRK2 (By similarity). During development, promotes the survival and differentiation of selected neuronal populations of the peripheral and central nervous systems. Participates in axonal growth, pathfinding and in the modulation of dendritic growth and morphology. Major regulator of synaptic transmission and plasticity at adult synapses in many regions of the CNS. The versatility of BDNF is emphasized by its contribution to a range of adaptive neuronal responses including long-term potentiation (LTP), long-term depression (LTD), certain forms of short-term synaptic plasticity, as well as homeostatic regulation of intrinsic neuronal excitability (By similarity).</text>
</comment>
<comment type="function">
    <molecule>Neurotrophic factor BDNF precursor form</molecule>
    <text evidence="1">Important signaling molecule that activates signaling cascades downstream of NTRK2. Activates signaling cascades via the heterodimeric receptor formed by NGFR and SORCS2. Signaling via NGFR and SORCS2 plays a role in synaptic plasticity and long-term depression (LTD). Binding to NGFR and SORCS2 promotes neuronal apoptosis. Promotes neuronal growth cone collapse.</text>
</comment>
<comment type="subunit">
    <text evidence="1 2">Monomers and homodimers (By similarity). Binds to NTRK2/TRKB. Can form heterodimers with other neurotrophin family members, such as NTF3 and NTF4 (in vitro), but the physiological relevance of this is not clear (By similarity). BDNF precursor form: interacts with the heterodimer formed by NGFR and SORCS2. Mature BDNF has much lower affinity for the heterodimer formed by NGFR and SORCS2 (By similarity).</text>
</comment>
<comment type="subcellular location">
    <subcellularLocation>
        <location evidence="2">Secreted</location>
    </subcellularLocation>
</comment>
<comment type="subcellular location">
    <molecule>Neurotrophic factor BDNF precursor form</molecule>
    <subcellularLocation>
        <location evidence="2">Secreted</location>
    </subcellularLocation>
    <text evidence="2">A proportion of BDNF is secreted as immature precursor (proBDNF).</text>
</comment>
<comment type="PTM">
    <molecule>Neurotrophic factor BDNF precursor form</molecule>
    <text evidence="2">N-glycosylated and glycosulfated, contrary to mature BDNF.</text>
</comment>
<comment type="PTM">
    <text evidence="2">Mature BDNF is produced by proteolytic removal of the propeptide, catalyzed by a FURIN family member. In addition, the precursor form is proteolytically cleaved within the propeptide, but this is not an obligatory intermediate for the production of mature BDNF. Can be converted into mature BDNF by plasmin (PLG).</text>
</comment>
<comment type="similarity">
    <text evidence="4">Belongs to the NGF-beta family.</text>
</comment>
<protein>
    <recommendedName>
        <fullName evidence="4">Neurotrophic factor BDNF precursor form</fullName>
        <shortName>proBDNF</shortName>
    </recommendedName>
    <alternativeName>
        <fullName>Brain-derived neurotrophic factor</fullName>
    </alternativeName>
    <component>
        <recommendedName>
            <fullName>Neurotrophic factor BDNF</fullName>
        </recommendedName>
    </component>
</protein>
<gene>
    <name type="primary">BDNF</name>
</gene>
<feature type="signal peptide" evidence="3">
    <location>
        <begin position="1"/>
        <end position="18"/>
    </location>
</feature>
<feature type="chain" id="PRO_0000447544" description="Neurotrophic factor BDNF precursor form">
    <location>
        <begin position="19"/>
        <end position="247"/>
    </location>
</feature>
<feature type="propeptide" id="PRO_0000019647" evidence="1">
    <location>
        <begin position="19"/>
        <end position="128"/>
    </location>
</feature>
<feature type="chain" id="PRO_0000019648" description="Neurotrophic factor BDNF">
    <location>
        <begin position="129"/>
        <end position="247"/>
    </location>
</feature>
<feature type="site" description="Cleavage; by MBTPS1" evidence="2">
    <location>
        <begin position="57"/>
        <end position="58"/>
    </location>
</feature>
<feature type="glycosylation site" description="N-linked (GlcNAc...) asparagine" evidence="3">
    <location>
        <position position="121"/>
    </location>
</feature>
<feature type="disulfide bond" evidence="2">
    <location>
        <begin position="141"/>
        <end position="208"/>
    </location>
</feature>
<feature type="disulfide bond" evidence="2">
    <location>
        <begin position="186"/>
        <end position="237"/>
    </location>
</feature>
<feature type="disulfide bond" evidence="2">
    <location>
        <begin position="196"/>
        <end position="239"/>
    </location>
</feature>
<reference key="1">
    <citation type="submission" date="1997-05" db="EMBL/GenBank/DDBJ databases">
        <authorList>
            <person name="Lin F."/>
        </authorList>
    </citation>
    <scope>NUCLEOTIDE SEQUENCE [GENOMIC DNA]</scope>
</reference>
<keyword id="KW-0165">Cleavage on pair of basic residues</keyword>
<keyword id="KW-1015">Disulfide bond</keyword>
<keyword id="KW-0325">Glycoprotein</keyword>
<keyword id="KW-0339">Growth factor</keyword>
<keyword id="KW-0964">Secreted</keyword>
<keyword id="KW-0732">Signal</keyword>
<sequence>MTILFLTMVISYFGCMKAAPMKEANVRGQGSLAYPGVRTHGTLESVNGPKAGSRGLTSLADTFEHVIEELLDEDQKVRPSEENNKDADLYTSRVMLSSQVPLEPPLLFLLEEYKNYLDAANMSMRVRRHSDPARRGELSVCDSISEWVTAADKKTAVDMSGGTVTVLEKVPVSKGQLKQYFYETKCNPMGYTKEGCRGIDKRHWNSQCRTTQSYVRALTMDSKKRIGWRFIRIDTSCVCTLTIKRGR</sequence>
<evidence type="ECO:0000250" key="1">
    <source>
        <dbReference type="UniProtKB" id="P21237"/>
    </source>
</evidence>
<evidence type="ECO:0000250" key="2">
    <source>
        <dbReference type="UniProtKB" id="P23560"/>
    </source>
</evidence>
<evidence type="ECO:0000255" key="3"/>
<evidence type="ECO:0000305" key="4"/>
<dbReference type="EMBL" id="AF002240">
    <property type="protein sequence ID" value="AAB71653.1"/>
    <property type="molecule type" value="Genomic_DNA"/>
</dbReference>
<dbReference type="SMR" id="O18753"/>
<dbReference type="GlyCosmos" id="O18753">
    <property type="glycosylation" value="1 site, No reported glycans"/>
</dbReference>
<dbReference type="GO" id="GO:0030424">
    <property type="term" value="C:axon"/>
    <property type="evidence" value="ECO:0007669"/>
    <property type="project" value="TreeGrafter"/>
</dbReference>
<dbReference type="GO" id="GO:0030425">
    <property type="term" value="C:dendrite"/>
    <property type="evidence" value="ECO:0007669"/>
    <property type="project" value="TreeGrafter"/>
</dbReference>
<dbReference type="GO" id="GO:0005615">
    <property type="term" value="C:extracellular space"/>
    <property type="evidence" value="ECO:0007669"/>
    <property type="project" value="TreeGrafter"/>
</dbReference>
<dbReference type="GO" id="GO:0008021">
    <property type="term" value="C:synaptic vesicle"/>
    <property type="evidence" value="ECO:0007669"/>
    <property type="project" value="TreeGrafter"/>
</dbReference>
<dbReference type="GO" id="GO:0008083">
    <property type="term" value="F:growth factor activity"/>
    <property type="evidence" value="ECO:0007669"/>
    <property type="project" value="UniProtKB-KW"/>
</dbReference>
<dbReference type="GO" id="GO:0005163">
    <property type="term" value="F:nerve growth factor receptor binding"/>
    <property type="evidence" value="ECO:0007669"/>
    <property type="project" value="TreeGrafter"/>
</dbReference>
<dbReference type="GO" id="GO:0007169">
    <property type="term" value="P:cell surface receptor protein tyrosine kinase signaling pathway"/>
    <property type="evidence" value="ECO:0007669"/>
    <property type="project" value="TreeGrafter"/>
</dbReference>
<dbReference type="GO" id="GO:0050804">
    <property type="term" value="P:modulation of chemical synaptic transmission"/>
    <property type="evidence" value="ECO:0007669"/>
    <property type="project" value="TreeGrafter"/>
</dbReference>
<dbReference type="GO" id="GO:0043524">
    <property type="term" value="P:negative regulation of neuron apoptotic process"/>
    <property type="evidence" value="ECO:0007669"/>
    <property type="project" value="TreeGrafter"/>
</dbReference>
<dbReference type="GO" id="GO:0021675">
    <property type="term" value="P:nerve development"/>
    <property type="evidence" value="ECO:0007669"/>
    <property type="project" value="TreeGrafter"/>
</dbReference>
<dbReference type="GO" id="GO:0038180">
    <property type="term" value="P:nerve growth factor signaling pathway"/>
    <property type="evidence" value="ECO:0007669"/>
    <property type="project" value="TreeGrafter"/>
</dbReference>
<dbReference type="GO" id="GO:0048812">
    <property type="term" value="P:neuron projection morphogenesis"/>
    <property type="evidence" value="ECO:0007669"/>
    <property type="project" value="TreeGrafter"/>
</dbReference>
<dbReference type="FunFam" id="2.10.90.10:FF:000002">
    <property type="entry name" value="Brain-derived neurotrophic factor"/>
    <property type="match status" value="1"/>
</dbReference>
<dbReference type="Gene3D" id="2.10.90.10">
    <property type="entry name" value="Cystine-knot cytokines"/>
    <property type="match status" value="1"/>
</dbReference>
<dbReference type="InterPro" id="IPR020430">
    <property type="entry name" value="Brain-der_neurotrophic_factor"/>
</dbReference>
<dbReference type="InterPro" id="IPR029034">
    <property type="entry name" value="Cystine-knot_cytokine"/>
</dbReference>
<dbReference type="InterPro" id="IPR020408">
    <property type="entry name" value="Nerve_growth_factor-like"/>
</dbReference>
<dbReference type="InterPro" id="IPR002072">
    <property type="entry name" value="Nerve_growth_factor-rel"/>
</dbReference>
<dbReference type="InterPro" id="IPR019846">
    <property type="entry name" value="Nerve_growth_factor_CS"/>
</dbReference>
<dbReference type="PANTHER" id="PTHR11589:SF3">
    <property type="entry name" value="BRAIN-DERIVED NEUROTROPHIC FACTOR"/>
    <property type="match status" value="1"/>
</dbReference>
<dbReference type="PANTHER" id="PTHR11589">
    <property type="entry name" value="NERVE GROWTH FACTOR NGF -RELATED"/>
    <property type="match status" value="1"/>
</dbReference>
<dbReference type="Pfam" id="PF00243">
    <property type="entry name" value="NGF"/>
    <property type="match status" value="1"/>
</dbReference>
<dbReference type="PIRSF" id="PIRSF001789">
    <property type="entry name" value="NGF"/>
    <property type="match status" value="1"/>
</dbReference>
<dbReference type="PRINTS" id="PR01912">
    <property type="entry name" value="BDNFACTOR"/>
</dbReference>
<dbReference type="PRINTS" id="PR00268">
    <property type="entry name" value="NGF"/>
</dbReference>
<dbReference type="SMART" id="SM00140">
    <property type="entry name" value="NGF"/>
    <property type="match status" value="1"/>
</dbReference>
<dbReference type="SUPFAM" id="SSF57501">
    <property type="entry name" value="Cystine-knot cytokines"/>
    <property type="match status" value="1"/>
</dbReference>
<dbReference type="PROSITE" id="PS00248">
    <property type="entry name" value="NGF_1"/>
    <property type="match status" value="1"/>
</dbReference>
<dbReference type="PROSITE" id="PS50270">
    <property type="entry name" value="NGF_2"/>
    <property type="match status" value="1"/>
</dbReference>